<evidence type="ECO:0000250" key="1"/>
<evidence type="ECO:0000255" key="2"/>
<evidence type="ECO:0000305" key="3"/>
<keyword id="KW-1003">Cell membrane</keyword>
<keyword id="KW-0350">Heme biosynthesis</keyword>
<keyword id="KW-0472">Membrane</keyword>
<keyword id="KW-1185">Reference proteome</keyword>
<keyword id="KW-0808">Transferase</keyword>
<keyword id="KW-0812">Transmembrane</keyword>
<keyword id="KW-1133">Transmembrane helix</keyword>
<protein>
    <recommendedName>
        <fullName>Protoheme IX farnesyltransferase</fullName>
        <ecNumber>2.5.1.141</ecNumber>
    </recommendedName>
    <alternativeName>
        <fullName>Heme B farnesyltransferase</fullName>
    </alternativeName>
    <alternativeName>
        <fullName>Heme O synthase</fullName>
    </alternativeName>
</protein>
<organism>
    <name type="scientific">Halobacterium salinarum (strain ATCC 700922 / JCM 11081 / NRC-1)</name>
    <name type="common">Halobacterium halobium</name>
    <dbReference type="NCBI Taxonomy" id="64091"/>
    <lineage>
        <taxon>Archaea</taxon>
        <taxon>Methanobacteriati</taxon>
        <taxon>Methanobacteriota</taxon>
        <taxon>Stenosarchaea group</taxon>
        <taxon>Halobacteria</taxon>
        <taxon>Halobacteriales</taxon>
        <taxon>Halobacteriaceae</taxon>
        <taxon>Halobacterium</taxon>
        <taxon>Halobacterium salinarum NRC-34001</taxon>
    </lineage>
</organism>
<name>COXX_HALSA</name>
<feature type="chain" id="PRO_0000327195" description="Protoheme IX farnesyltransferase">
    <location>
        <begin position="1"/>
        <end position="442"/>
    </location>
</feature>
<feature type="transmembrane region" description="Helical" evidence="2">
    <location>
        <begin position="49"/>
        <end position="69"/>
    </location>
</feature>
<feature type="transmembrane region" description="Helical" evidence="2">
    <location>
        <begin position="76"/>
        <end position="96"/>
    </location>
</feature>
<feature type="transmembrane region" description="Helical" evidence="2">
    <location>
        <begin position="106"/>
        <end position="126"/>
    </location>
</feature>
<feature type="transmembrane region" description="Helical" evidence="2">
    <location>
        <begin position="167"/>
        <end position="187"/>
    </location>
</feature>
<feature type="transmembrane region" description="Helical" evidence="2">
    <location>
        <begin position="194"/>
        <end position="214"/>
    </location>
</feature>
<feature type="transmembrane region" description="Helical" evidence="2">
    <location>
        <begin position="245"/>
        <end position="265"/>
    </location>
</feature>
<feature type="transmembrane region" description="Helical" evidence="2">
    <location>
        <begin position="267"/>
        <end position="287"/>
    </location>
</feature>
<feature type="transmembrane region" description="Helical" evidence="2">
    <location>
        <begin position="308"/>
        <end position="328"/>
    </location>
</feature>
<feature type="transmembrane region" description="Helical" evidence="2">
    <location>
        <begin position="365"/>
        <end position="385"/>
    </location>
</feature>
<feature type="transmembrane region" description="Helical" evidence="2">
    <location>
        <begin position="386"/>
        <end position="406"/>
    </location>
</feature>
<feature type="transmembrane region" description="Helical" evidence="2">
    <location>
        <begin position="421"/>
        <end position="441"/>
    </location>
</feature>
<feature type="region of interest" description="Unknown">
    <location>
        <begin position="1"/>
        <end position="167"/>
    </location>
</feature>
<feature type="region of interest" description="Prenyltransferase">
    <location>
        <begin position="168"/>
        <end position="439"/>
    </location>
</feature>
<accession>Q9HRJ8</accession>
<reference key="1">
    <citation type="journal article" date="2000" name="Proc. Natl. Acad. Sci. U.S.A.">
        <title>Genome sequence of Halobacterium species NRC-1.</title>
        <authorList>
            <person name="Ng W.V."/>
            <person name="Kennedy S.P."/>
            <person name="Mahairas G.G."/>
            <person name="Berquist B."/>
            <person name="Pan M."/>
            <person name="Shukla H.D."/>
            <person name="Lasky S.R."/>
            <person name="Baliga N.S."/>
            <person name="Thorsson V."/>
            <person name="Sbrogna J."/>
            <person name="Swartzell S."/>
            <person name="Weir D."/>
            <person name="Hall J."/>
            <person name="Dahl T.A."/>
            <person name="Welti R."/>
            <person name="Goo Y.A."/>
            <person name="Leithauser B."/>
            <person name="Keller K."/>
            <person name="Cruz R."/>
            <person name="Danson M.J."/>
            <person name="Hough D.W."/>
            <person name="Maddocks D.G."/>
            <person name="Jablonski P.E."/>
            <person name="Krebs M.P."/>
            <person name="Angevine C.M."/>
            <person name="Dale H."/>
            <person name="Isenbarger T.A."/>
            <person name="Peck R.F."/>
            <person name="Pohlschroder M."/>
            <person name="Spudich J.L."/>
            <person name="Jung K.-H."/>
            <person name="Alam M."/>
            <person name="Freitas T."/>
            <person name="Hou S."/>
            <person name="Daniels C.J."/>
            <person name="Dennis P.P."/>
            <person name="Omer A.D."/>
            <person name="Ebhardt H."/>
            <person name="Lowe T.M."/>
            <person name="Liang P."/>
            <person name="Riley M."/>
            <person name="Hood L."/>
            <person name="DasSarma S."/>
        </authorList>
    </citation>
    <scope>NUCLEOTIDE SEQUENCE [LARGE SCALE GENOMIC DNA]</scope>
    <source>
        <strain>ATCC 700922 / JCM 11081 / NRC-1</strain>
    </source>
</reference>
<dbReference type="EC" id="2.5.1.141"/>
<dbReference type="EMBL" id="AE004437">
    <property type="protein sequence ID" value="AAG19160.1"/>
    <property type="molecule type" value="Genomic_DNA"/>
</dbReference>
<dbReference type="PIR" id="D84224">
    <property type="entry name" value="D84224"/>
</dbReference>
<dbReference type="SMR" id="Q9HRJ8"/>
<dbReference type="STRING" id="64091.VNG_0666G"/>
<dbReference type="PaxDb" id="64091-VNG_0666G"/>
<dbReference type="KEGG" id="hal:VNG_0666G"/>
<dbReference type="PATRIC" id="fig|64091.14.peg.508"/>
<dbReference type="HOGENOM" id="CLU_030009_1_1_2"/>
<dbReference type="InParanoid" id="Q9HRJ8"/>
<dbReference type="OrthoDB" id="131615at2157"/>
<dbReference type="UniPathway" id="UPA00834">
    <property type="reaction ID" value="UER00712"/>
</dbReference>
<dbReference type="Proteomes" id="UP000000554">
    <property type="component" value="Chromosome"/>
</dbReference>
<dbReference type="GO" id="GO:0005886">
    <property type="term" value="C:plasma membrane"/>
    <property type="evidence" value="ECO:0007669"/>
    <property type="project" value="UniProtKB-SubCell"/>
</dbReference>
<dbReference type="GO" id="GO:0008495">
    <property type="term" value="F:protoheme IX farnesyltransferase activity"/>
    <property type="evidence" value="ECO:0000318"/>
    <property type="project" value="GO_Central"/>
</dbReference>
<dbReference type="GO" id="GO:0006783">
    <property type="term" value="P:heme biosynthetic process"/>
    <property type="evidence" value="ECO:0000318"/>
    <property type="project" value="GO_Central"/>
</dbReference>
<dbReference type="GO" id="GO:0048034">
    <property type="term" value="P:heme O biosynthetic process"/>
    <property type="evidence" value="ECO:0007669"/>
    <property type="project" value="UniProtKB-UniRule"/>
</dbReference>
<dbReference type="CDD" id="cd13957">
    <property type="entry name" value="PT_UbiA_Cox10"/>
    <property type="match status" value="1"/>
</dbReference>
<dbReference type="Gene3D" id="1.10.357.140">
    <property type="entry name" value="UbiA prenyltransferase"/>
    <property type="match status" value="1"/>
</dbReference>
<dbReference type="Gene3D" id="1.20.120.1780">
    <property type="entry name" value="UbiA prenyltransferase"/>
    <property type="match status" value="1"/>
</dbReference>
<dbReference type="HAMAP" id="MF_00154">
    <property type="entry name" value="CyoE_CtaB"/>
    <property type="match status" value="1"/>
</dbReference>
<dbReference type="InterPro" id="IPR006369">
    <property type="entry name" value="Protohaem_IX_farnesylTrfase"/>
</dbReference>
<dbReference type="InterPro" id="IPR000537">
    <property type="entry name" value="UbiA_prenyltransferase"/>
</dbReference>
<dbReference type="InterPro" id="IPR044878">
    <property type="entry name" value="UbiA_sf"/>
</dbReference>
<dbReference type="NCBIfam" id="TIGR01473">
    <property type="entry name" value="cyoE_ctaB"/>
    <property type="match status" value="1"/>
</dbReference>
<dbReference type="NCBIfam" id="NF003349">
    <property type="entry name" value="PRK04375.1-2"/>
    <property type="match status" value="1"/>
</dbReference>
<dbReference type="PANTHER" id="PTHR43448">
    <property type="entry name" value="PROTOHEME IX FARNESYLTRANSFERASE, MITOCHONDRIAL"/>
    <property type="match status" value="1"/>
</dbReference>
<dbReference type="PANTHER" id="PTHR43448:SF2">
    <property type="entry name" value="PROTOHEME IX FARNESYLTRANSFERASE, MITOCHONDRIAL"/>
    <property type="match status" value="1"/>
</dbReference>
<dbReference type="Pfam" id="PF01040">
    <property type="entry name" value="UbiA"/>
    <property type="match status" value="1"/>
</dbReference>
<gene>
    <name type="primary">ctaB</name>
    <name type="ordered locus">VNG_0666G</name>
</gene>
<comment type="function">
    <text evidence="1">Converts heme B (protoheme IX) to heme O by substitution of the vinyl group on carbon 2 of heme B porphyrin ring with a hydroxyethyl farnesyl side group.</text>
</comment>
<comment type="catalytic activity">
    <reaction>
        <text>heme b + (2E,6E)-farnesyl diphosphate + H2O = Fe(II)-heme o + diphosphate</text>
        <dbReference type="Rhea" id="RHEA:28070"/>
        <dbReference type="ChEBI" id="CHEBI:15377"/>
        <dbReference type="ChEBI" id="CHEBI:33019"/>
        <dbReference type="ChEBI" id="CHEBI:60344"/>
        <dbReference type="ChEBI" id="CHEBI:60530"/>
        <dbReference type="ChEBI" id="CHEBI:175763"/>
        <dbReference type="EC" id="2.5.1.141"/>
    </reaction>
</comment>
<comment type="pathway">
    <text>Porphyrin-containing compound metabolism; heme O biosynthesis; heme O from protoheme: step 1/1.</text>
</comment>
<comment type="subcellular location">
    <subcellularLocation>
        <location evidence="3">Cell membrane</location>
        <topology evidence="3">Multi-pass membrane protein</topology>
    </subcellularLocation>
</comment>
<comment type="miscellaneous">
    <text evidence="1">Carbon 2 of the heme B porphyrin ring is defined according to the Fischer nomenclature.</text>
</comment>
<comment type="similarity">
    <text evidence="3">In the C-terminal section; belongs to the UbiA prenyltransferase family. Protoheme IX farnesyltransferase subfamily.</text>
</comment>
<proteinExistence type="inferred from homology"/>
<sequence length="442" mass="46128">MGVYSLLVLGATTSLTGAASACQTWPSCNGQWFALQSLDLVVVWGHRTAAALTGLAVVGAAVLAWRTGASRRVRTAVTLALALYPVQVVIGAYTAMSAGAAPFTGVHLTLGVGIFASLVVALAWTLDAQTGDLPSAEWEGEPRHTDDGDPTQPGIVRAYVQLMKPRLMWLLCLVAGAGMALASSQLGAGQQLSAATVVLTLGGGVLSIGASGTFNHVLEREQDEKMARTDDRPVVTDRIPPRNALAFGVVLGVASLAAFAAVNLLTAVLGLTAIAFYSIVYTLVLKPNTRQSTVIGGAAGALPALIGWVAVTGAVGVGGVVLAGVIFLWTPAHFYNLALAYKDDYERGGFPLMPVVEGEAKTRRHIVYYIGATLASAVVLAELTGLGPLYAATTVLLGAVFLYFAIRLHRERDRRAAMRSFHASNAYLGCLLVAVVLDTMVV</sequence>